<reference key="1">
    <citation type="submission" date="2008-06" db="EMBL/GenBank/DDBJ databases">
        <title>Complete sequence of Chlorobium phaeobacteroides BS1.</title>
        <authorList>
            <consortium name="US DOE Joint Genome Institute"/>
            <person name="Lucas S."/>
            <person name="Copeland A."/>
            <person name="Lapidus A."/>
            <person name="Glavina del Rio T."/>
            <person name="Dalin E."/>
            <person name="Tice H."/>
            <person name="Bruce D."/>
            <person name="Goodwin L."/>
            <person name="Pitluck S."/>
            <person name="Schmutz J."/>
            <person name="Larimer F."/>
            <person name="Land M."/>
            <person name="Hauser L."/>
            <person name="Kyrpides N."/>
            <person name="Ovchinnikova G."/>
            <person name="Li T."/>
            <person name="Liu Z."/>
            <person name="Zhao F."/>
            <person name="Overmann J."/>
            <person name="Bryant D.A."/>
            <person name="Richardson P."/>
        </authorList>
    </citation>
    <scope>NUCLEOTIDE SEQUENCE [LARGE SCALE GENOMIC DNA]</scope>
    <source>
        <strain>BS1</strain>
    </source>
</reference>
<sequence length="466" mass="51157">MNAETTDGKRVSIIGAKRSGIAAALLLQQRGATVYVSDREPVGDAERAFLEHHGIAFEEEGHTDRILEADFSVVSPGIPPHASVIRRLEHEAIPLFSEIEAASWFCPAFIIGITGTDGKTTTSSMVEAICLSGANSREQRVFSAGNIGVPFSSLVGEMRKGDIAVVELSSYQLERCRSFRPDVAVITNIMPDHLDRYGGSMKRYAEAKYRIYAQQRKQDTLVYNADDETLRAHFEGGGAFVPQLVPFSLDRKRASLGGACYAAIEGDWLITVVNGREEKVITGSGLFKRSFRGRHNLENALAAVAATRAAGVDVFPIREALRRFAGVEHRQEYVRTMHGVDWINDSKATNLNALRQALDATPGKLVLIAGGRDKGDDLSDLEERVRQKVSVLVVFGESKAKFTEAFSSVVRVVPALSLEEAVEQAQRYASTGETVLFSPGCSSFDMFESFEERGMRFKKHVEGMQS</sequence>
<name>MURD_CHLPB</name>
<accession>B3EQC0</accession>
<dbReference type="EC" id="6.3.2.9" evidence="1"/>
<dbReference type="EMBL" id="CP001101">
    <property type="protein sequence ID" value="ACE05418.1"/>
    <property type="molecule type" value="Genomic_DNA"/>
</dbReference>
<dbReference type="SMR" id="B3EQC0"/>
<dbReference type="STRING" id="331678.Cphamn1_2524"/>
<dbReference type="KEGG" id="cpb:Cphamn1_2524"/>
<dbReference type="eggNOG" id="COG0771">
    <property type="taxonomic scope" value="Bacteria"/>
</dbReference>
<dbReference type="HOGENOM" id="CLU_032540_0_0_10"/>
<dbReference type="OrthoDB" id="9809796at2"/>
<dbReference type="UniPathway" id="UPA00219"/>
<dbReference type="GO" id="GO:0005737">
    <property type="term" value="C:cytoplasm"/>
    <property type="evidence" value="ECO:0007669"/>
    <property type="project" value="UniProtKB-SubCell"/>
</dbReference>
<dbReference type="GO" id="GO:0005524">
    <property type="term" value="F:ATP binding"/>
    <property type="evidence" value="ECO:0007669"/>
    <property type="project" value="UniProtKB-UniRule"/>
</dbReference>
<dbReference type="GO" id="GO:0008764">
    <property type="term" value="F:UDP-N-acetylmuramoylalanine-D-glutamate ligase activity"/>
    <property type="evidence" value="ECO:0007669"/>
    <property type="project" value="UniProtKB-UniRule"/>
</dbReference>
<dbReference type="GO" id="GO:0051301">
    <property type="term" value="P:cell division"/>
    <property type="evidence" value="ECO:0007669"/>
    <property type="project" value="UniProtKB-KW"/>
</dbReference>
<dbReference type="GO" id="GO:0071555">
    <property type="term" value="P:cell wall organization"/>
    <property type="evidence" value="ECO:0007669"/>
    <property type="project" value="UniProtKB-KW"/>
</dbReference>
<dbReference type="GO" id="GO:0009252">
    <property type="term" value="P:peptidoglycan biosynthetic process"/>
    <property type="evidence" value="ECO:0007669"/>
    <property type="project" value="UniProtKB-UniRule"/>
</dbReference>
<dbReference type="GO" id="GO:0008360">
    <property type="term" value="P:regulation of cell shape"/>
    <property type="evidence" value="ECO:0007669"/>
    <property type="project" value="UniProtKB-KW"/>
</dbReference>
<dbReference type="Gene3D" id="3.90.190.20">
    <property type="entry name" value="Mur ligase, C-terminal domain"/>
    <property type="match status" value="1"/>
</dbReference>
<dbReference type="Gene3D" id="3.40.1190.10">
    <property type="entry name" value="Mur-like, catalytic domain"/>
    <property type="match status" value="1"/>
</dbReference>
<dbReference type="Gene3D" id="3.40.50.720">
    <property type="entry name" value="NAD(P)-binding Rossmann-like Domain"/>
    <property type="match status" value="1"/>
</dbReference>
<dbReference type="HAMAP" id="MF_00639">
    <property type="entry name" value="MurD"/>
    <property type="match status" value="1"/>
</dbReference>
<dbReference type="InterPro" id="IPR036565">
    <property type="entry name" value="Mur-like_cat_sf"/>
</dbReference>
<dbReference type="InterPro" id="IPR004101">
    <property type="entry name" value="Mur_ligase_C"/>
</dbReference>
<dbReference type="InterPro" id="IPR036615">
    <property type="entry name" value="Mur_ligase_C_dom_sf"/>
</dbReference>
<dbReference type="InterPro" id="IPR013221">
    <property type="entry name" value="Mur_ligase_cen"/>
</dbReference>
<dbReference type="InterPro" id="IPR005762">
    <property type="entry name" value="MurD"/>
</dbReference>
<dbReference type="NCBIfam" id="TIGR01087">
    <property type="entry name" value="murD"/>
    <property type="match status" value="1"/>
</dbReference>
<dbReference type="PANTHER" id="PTHR43692">
    <property type="entry name" value="UDP-N-ACETYLMURAMOYLALANINE--D-GLUTAMATE LIGASE"/>
    <property type="match status" value="1"/>
</dbReference>
<dbReference type="PANTHER" id="PTHR43692:SF1">
    <property type="entry name" value="UDP-N-ACETYLMURAMOYLALANINE--D-GLUTAMATE LIGASE"/>
    <property type="match status" value="1"/>
</dbReference>
<dbReference type="Pfam" id="PF02875">
    <property type="entry name" value="Mur_ligase_C"/>
    <property type="match status" value="1"/>
</dbReference>
<dbReference type="Pfam" id="PF08245">
    <property type="entry name" value="Mur_ligase_M"/>
    <property type="match status" value="1"/>
</dbReference>
<dbReference type="Pfam" id="PF21377">
    <property type="entry name" value="MurD_N"/>
    <property type="match status" value="1"/>
</dbReference>
<dbReference type="SUPFAM" id="SSF51984">
    <property type="entry name" value="MurCD N-terminal domain"/>
    <property type="match status" value="1"/>
</dbReference>
<dbReference type="SUPFAM" id="SSF53623">
    <property type="entry name" value="MurD-like peptide ligases, catalytic domain"/>
    <property type="match status" value="1"/>
</dbReference>
<dbReference type="SUPFAM" id="SSF53244">
    <property type="entry name" value="MurD-like peptide ligases, peptide-binding domain"/>
    <property type="match status" value="1"/>
</dbReference>
<gene>
    <name evidence="1" type="primary">murD</name>
    <name type="ordered locus">Cphamn1_2524</name>
</gene>
<comment type="function">
    <text evidence="1">Cell wall formation. Catalyzes the addition of glutamate to the nucleotide precursor UDP-N-acetylmuramoyl-L-alanine (UMA).</text>
</comment>
<comment type="catalytic activity">
    <reaction evidence="1">
        <text>UDP-N-acetyl-alpha-D-muramoyl-L-alanine + D-glutamate + ATP = UDP-N-acetyl-alpha-D-muramoyl-L-alanyl-D-glutamate + ADP + phosphate + H(+)</text>
        <dbReference type="Rhea" id="RHEA:16429"/>
        <dbReference type="ChEBI" id="CHEBI:15378"/>
        <dbReference type="ChEBI" id="CHEBI:29986"/>
        <dbReference type="ChEBI" id="CHEBI:30616"/>
        <dbReference type="ChEBI" id="CHEBI:43474"/>
        <dbReference type="ChEBI" id="CHEBI:83898"/>
        <dbReference type="ChEBI" id="CHEBI:83900"/>
        <dbReference type="ChEBI" id="CHEBI:456216"/>
        <dbReference type="EC" id="6.3.2.9"/>
    </reaction>
</comment>
<comment type="pathway">
    <text evidence="1">Cell wall biogenesis; peptidoglycan biosynthesis.</text>
</comment>
<comment type="subcellular location">
    <subcellularLocation>
        <location evidence="1">Cytoplasm</location>
    </subcellularLocation>
</comment>
<comment type="similarity">
    <text evidence="1">Belongs to the MurCDEF family.</text>
</comment>
<organism>
    <name type="scientific">Chlorobium phaeobacteroides (strain BS1)</name>
    <dbReference type="NCBI Taxonomy" id="331678"/>
    <lineage>
        <taxon>Bacteria</taxon>
        <taxon>Pseudomonadati</taxon>
        <taxon>Chlorobiota</taxon>
        <taxon>Chlorobiia</taxon>
        <taxon>Chlorobiales</taxon>
        <taxon>Chlorobiaceae</taxon>
        <taxon>Chlorobium/Pelodictyon group</taxon>
        <taxon>Chlorobium</taxon>
    </lineage>
</organism>
<keyword id="KW-0067">ATP-binding</keyword>
<keyword id="KW-0131">Cell cycle</keyword>
<keyword id="KW-0132">Cell division</keyword>
<keyword id="KW-0133">Cell shape</keyword>
<keyword id="KW-0961">Cell wall biogenesis/degradation</keyword>
<keyword id="KW-0963">Cytoplasm</keyword>
<keyword id="KW-0436">Ligase</keyword>
<keyword id="KW-0547">Nucleotide-binding</keyword>
<keyword id="KW-0573">Peptidoglycan synthesis</keyword>
<protein>
    <recommendedName>
        <fullName evidence="1">UDP-N-acetylmuramoylalanine--D-glutamate ligase</fullName>
        <ecNumber evidence="1">6.3.2.9</ecNumber>
    </recommendedName>
    <alternativeName>
        <fullName evidence="1">D-glutamic acid-adding enzyme</fullName>
    </alternativeName>
    <alternativeName>
        <fullName evidence="1">UDP-N-acetylmuramoyl-L-alanyl-D-glutamate synthetase</fullName>
    </alternativeName>
</protein>
<feature type="chain" id="PRO_1000130839" description="UDP-N-acetylmuramoylalanine--D-glutamate ligase">
    <location>
        <begin position="1"/>
        <end position="466"/>
    </location>
</feature>
<feature type="binding site" evidence="1">
    <location>
        <begin position="115"/>
        <end position="121"/>
    </location>
    <ligand>
        <name>ATP</name>
        <dbReference type="ChEBI" id="CHEBI:30616"/>
    </ligand>
</feature>
<proteinExistence type="inferred from homology"/>
<evidence type="ECO:0000255" key="1">
    <source>
        <dbReference type="HAMAP-Rule" id="MF_00639"/>
    </source>
</evidence>